<protein>
    <recommendedName>
        <fullName>Uncharacterized mitochondrial protein AtMg00710</fullName>
    </recommendedName>
    <alternativeName>
        <fullName>ORF120</fullName>
    </alternativeName>
</protein>
<reference key="1">
    <citation type="journal article" date="1997" name="Nat. Genet.">
        <title>The mitochondrial genome of Arabidopsis thaliana contains 57 genes in 366,924 nucleotides.</title>
        <authorList>
            <person name="Unseld M."/>
            <person name="Marienfeld J.R."/>
            <person name="Brandt P."/>
            <person name="Brennicke A."/>
        </authorList>
    </citation>
    <scope>NUCLEOTIDE SEQUENCE [LARGE SCALE GENOMIC DNA]</scope>
    <source>
        <strain>cv. C24</strain>
    </source>
</reference>
<reference key="2">
    <citation type="journal article" date="2018" name="Plant Cell">
        <title>Correction of persistent errors in Arabidopsis reference mitochondrial genomes.</title>
        <authorList>
            <person name="Sloan D.B."/>
            <person name="Wu Z."/>
            <person name="Sharbrough J."/>
        </authorList>
    </citation>
    <scope>NUCLEOTIDE SEQUENCE [LARGE SCALE GENOMIC DNA]</scope>
    <source>
        <strain>cv. Columbia</strain>
    </source>
</reference>
<gene>
    <name type="ordered locus">AtMg00710</name>
</gene>
<name>M710_ARATH</name>
<dbReference type="EMBL" id="Y08501">
    <property type="protein sequence ID" value="CAA69816.1"/>
    <property type="molecule type" value="Genomic_DNA"/>
</dbReference>
<dbReference type="EMBL" id="BK010421">
    <property type="status" value="NOT_ANNOTATED_CDS"/>
    <property type="molecule type" value="Genomic_DNA"/>
</dbReference>
<dbReference type="RefSeq" id="NP_085530.1">
    <property type="nucleotide sequence ID" value="NC_001284.2"/>
</dbReference>
<dbReference type="STRING" id="3702.P92512"/>
<dbReference type="PaxDb" id="3702-ATMG00710.1"/>
<dbReference type="EnsemblPlants" id="ATMG00710.1">
    <property type="protein sequence ID" value="ATMG00710.1"/>
    <property type="gene ID" value="ATMG00710"/>
</dbReference>
<dbReference type="Gramene" id="ATMG00710.1">
    <property type="protein sequence ID" value="ATMG00710.1"/>
    <property type="gene ID" value="ATMG00710"/>
</dbReference>
<dbReference type="Araport" id="ATMG00710"/>
<dbReference type="TAIR" id="ATMG00710">
    <property type="gene designation" value="ORF120"/>
</dbReference>
<dbReference type="eggNOG" id="KOG0017">
    <property type="taxonomic scope" value="Eukaryota"/>
</dbReference>
<dbReference type="HOGENOM" id="CLU_2052864_0_0_1"/>
<dbReference type="InParanoid" id="P92512"/>
<dbReference type="OMA" id="RSMLCEC"/>
<dbReference type="PRO" id="PR:P92512"/>
<dbReference type="Proteomes" id="UP000006548">
    <property type="component" value="Mitochondrion MT"/>
</dbReference>
<dbReference type="ExpressionAtlas" id="P92512">
    <property type="expression patterns" value="baseline and differential"/>
</dbReference>
<dbReference type="GO" id="GO:0005739">
    <property type="term" value="C:mitochondrion"/>
    <property type="evidence" value="ECO:0007669"/>
    <property type="project" value="UniProtKB-SubCell"/>
</dbReference>
<dbReference type="InterPro" id="IPR039537">
    <property type="entry name" value="Retrotran_Ty1/copia-like"/>
</dbReference>
<dbReference type="InterPro" id="IPR012337">
    <property type="entry name" value="RNaseH-like_sf"/>
</dbReference>
<dbReference type="PANTHER" id="PTHR42648">
    <property type="entry name" value="TRANSPOSASE, PUTATIVE-RELATED"/>
    <property type="match status" value="1"/>
</dbReference>
<dbReference type="PANTHER" id="PTHR42648:SF28">
    <property type="entry name" value="TRANSPOSON-ENCODED PROTEIN WITH RIBONUCLEASE H-LIKE AND RETROVIRUS ZINC FINGER-LIKE DOMAINS"/>
    <property type="match status" value="1"/>
</dbReference>
<dbReference type="SUPFAM" id="SSF53098">
    <property type="entry name" value="Ribonuclease H-like"/>
    <property type="match status" value="1"/>
</dbReference>
<sequence length="120" mass="13474">MNRTIIEKVRSMLCECGLPKTFRADAANTAVHIINKYPSTAINFHVPDEVWFQSVPTYSYLRRFGCVAYIHCDEGKLKPRAKKGEEKGSYLINRIVSILYTIGIGKTSSPRKASHLGIKG</sequence>
<accession>P92512</accession>
<accession>Q1ZY00</accession>
<proteinExistence type="predicted"/>
<comment type="subcellular location">
    <subcellularLocation>
        <location evidence="1">Mitochondrion</location>
    </subcellularLocation>
</comment>
<organism>
    <name type="scientific">Arabidopsis thaliana</name>
    <name type="common">Mouse-ear cress</name>
    <dbReference type="NCBI Taxonomy" id="3702"/>
    <lineage>
        <taxon>Eukaryota</taxon>
        <taxon>Viridiplantae</taxon>
        <taxon>Streptophyta</taxon>
        <taxon>Embryophyta</taxon>
        <taxon>Tracheophyta</taxon>
        <taxon>Spermatophyta</taxon>
        <taxon>Magnoliopsida</taxon>
        <taxon>eudicotyledons</taxon>
        <taxon>Gunneridae</taxon>
        <taxon>Pentapetalae</taxon>
        <taxon>rosids</taxon>
        <taxon>malvids</taxon>
        <taxon>Brassicales</taxon>
        <taxon>Brassicaceae</taxon>
        <taxon>Camelineae</taxon>
        <taxon>Arabidopsis</taxon>
    </lineage>
</organism>
<geneLocation type="mitochondrion"/>
<feature type="chain" id="PRO_0000196786" description="Uncharacterized mitochondrial protein AtMg00710">
    <location>
        <begin position="1"/>
        <end position="120"/>
    </location>
</feature>
<keyword id="KW-0496">Mitochondrion</keyword>
<keyword id="KW-1185">Reference proteome</keyword>
<evidence type="ECO:0000305" key="1"/>